<feature type="chain" id="PRO_0000371126" description="ATP synthase subunit delta">
    <location>
        <begin position="1"/>
        <end position="177"/>
    </location>
</feature>
<organism>
    <name type="scientific">Shewanella baltica (strain OS155 / ATCC BAA-1091)</name>
    <dbReference type="NCBI Taxonomy" id="325240"/>
    <lineage>
        <taxon>Bacteria</taxon>
        <taxon>Pseudomonadati</taxon>
        <taxon>Pseudomonadota</taxon>
        <taxon>Gammaproteobacteria</taxon>
        <taxon>Alteromonadales</taxon>
        <taxon>Shewanellaceae</taxon>
        <taxon>Shewanella</taxon>
    </lineage>
</organism>
<comment type="function">
    <text evidence="1">F(1)F(0) ATP synthase produces ATP from ADP in the presence of a proton or sodium gradient. F-type ATPases consist of two structural domains, F(1) containing the extramembraneous catalytic core and F(0) containing the membrane proton channel, linked together by a central stalk and a peripheral stalk. During catalysis, ATP synthesis in the catalytic domain of F(1) is coupled via a rotary mechanism of the central stalk subunits to proton translocation.</text>
</comment>
<comment type="function">
    <text evidence="1">This protein is part of the stalk that links CF(0) to CF(1). It either transmits conformational changes from CF(0) to CF(1) or is implicated in proton conduction.</text>
</comment>
<comment type="subunit">
    <text evidence="1">F-type ATPases have 2 components, F(1) - the catalytic core - and F(0) - the membrane proton channel. F(1) has five subunits: alpha(3), beta(3), gamma(1), delta(1), epsilon(1). F(0) has three main subunits: a(1), b(2) and c(10-14). The alpha and beta chains form an alternating ring which encloses part of the gamma chain. F(1) is attached to F(0) by a central stalk formed by the gamma and epsilon chains, while a peripheral stalk is formed by the delta and b chains.</text>
</comment>
<comment type="subcellular location">
    <subcellularLocation>
        <location evidence="1">Cell inner membrane</location>
        <topology evidence="1">Peripheral membrane protein</topology>
    </subcellularLocation>
</comment>
<comment type="similarity">
    <text evidence="1">Belongs to the ATPase delta chain family.</text>
</comment>
<evidence type="ECO:0000255" key="1">
    <source>
        <dbReference type="HAMAP-Rule" id="MF_01416"/>
    </source>
</evidence>
<sequence length="177" mass="19190">MAELTTIARPYAKAAFDFAIEQDAVDSWAEMLTFAALVSENETMQPLLAGSLASTKLAALFISVCGEQVNVQGQNLIKVMAENGRLKVLPAVSQLFTEYRNEWAKEVEADVVSATELSSEQQQQISISLEKRLARKVKLNCSTDAALIAGVIIKTGDLVIDGSVRGKLSRLSDKLQS</sequence>
<reference key="1">
    <citation type="submission" date="2007-02" db="EMBL/GenBank/DDBJ databases">
        <title>Complete sequence of chromosome of Shewanella baltica OS155.</title>
        <authorList>
            <consortium name="US DOE Joint Genome Institute"/>
            <person name="Copeland A."/>
            <person name="Lucas S."/>
            <person name="Lapidus A."/>
            <person name="Barry K."/>
            <person name="Detter J.C."/>
            <person name="Glavina del Rio T."/>
            <person name="Hammon N."/>
            <person name="Israni S."/>
            <person name="Dalin E."/>
            <person name="Tice H."/>
            <person name="Pitluck S."/>
            <person name="Sims D.R."/>
            <person name="Brettin T."/>
            <person name="Bruce D."/>
            <person name="Han C."/>
            <person name="Tapia R."/>
            <person name="Brainard J."/>
            <person name="Schmutz J."/>
            <person name="Larimer F."/>
            <person name="Land M."/>
            <person name="Hauser L."/>
            <person name="Kyrpides N."/>
            <person name="Mikhailova N."/>
            <person name="Brettar I."/>
            <person name="Klappenbach J."/>
            <person name="Konstantinidis K."/>
            <person name="Rodrigues J."/>
            <person name="Tiedje J."/>
            <person name="Richardson P."/>
        </authorList>
    </citation>
    <scope>NUCLEOTIDE SEQUENCE [LARGE SCALE GENOMIC DNA]</scope>
    <source>
        <strain>OS155 / ATCC BAA-1091</strain>
    </source>
</reference>
<accession>A3DAR7</accession>
<protein>
    <recommendedName>
        <fullName evidence="1">ATP synthase subunit delta</fullName>
    </recommendedName>
    <alternativeName>
        <fullName evidence="1">ATP synthase F(1) sector subunit delta</fullName>
    </alternativeName>
    <alternativeName>
        <fullName evidence="1">F-type ATPase subunit delta</fullName>
        <shortName evidence="1">F-ATPase subunit delta</shortName>
    </alternativeName>
</protein>
<keyword id="KW-0066">ATP synthesis</keyword>
<keyword id="KW-0997">Cell inner membrane</keyword>
<keyword id="KW-1003">Cell membrane</keyword>
<keyword id="KW-0139">CF(1)</keyword>
<keyword id="KW-0375">Hydrogen ion transport</keyword>
<keyword id="KW-0406">Ion transport</keyword>
<keyword id="KW-0472">Membrane</keyword>
<keyword id="KW-1185">Reference proteome</keyword>
<keyword id="KW-0813">Transport</keyword>
<gene>
    <name evidence="1" type="primary">atpH</name>
    <name type="ordered locus">Sbal_4369</name>
</gene>
<name>ATPD_SHEB5</name>
<proteinExistence type="inferred from homology"/>
<dbReference type="EMBL" id="CP000563">
    <property type="protein sequence ID" value="ABN63830.1"/>
    <property type="molecule type" value="Genomic_DNA"/>
</dbReference>
<dbReference type="RefSeq" id="WP_006083842.1">
    <property type="nucleotide sequence ID" value="NC_009052.1"/>
</dbReference>
<dbReference type="SMR" id="A3DAR7"/>
<dbReference type="STRING" id="325240.Sbal_4369"/>
<dbReference type="GeneID" id="11774463"/>
<dbReference type="KEGG" id="sbl:Sbal_4369"/>
<dbReference type="HOGENOM" id="CLU_085114_3_0_6"/>
<dbReference type="OrthoDB" id="9816221at2"/>
<dbReference type="Proteomes" id="UP000001557">
    <property type="component" value="Chromosome"/>
</dbReference>
<dbReference type="GO" id="GO:0005886">
    <property type="term" value="C:plasma membrane"/>
    <property type="evidence" value="ECO:0007669"/>
    <property type="project" value="UniProtKB-SubCell"/>
</dbReference>
<dbReference type="GO" id="GO:0045259">
    <property type="term" value="C:proton-transporting ATP synthase complex"/>
    <property type="evidence" value="ECO:0007669"/>
    <property type="project" value="UniProtKB-KW"/>
</dbReference>
<dbReference type="GO" id="GO:0046933">
    <property type="term" value="F:proton-transporting ATP synthase activity, rotational mechanism"/>
    <property type="evidence" value="ECO:0007669"/>
    <property type="project" value="UniProtKB-UniRule"/>
</dbReference>
<dbReference type="Gene3D" id="1.10.520.20">
    <property type="entry name" value="N-terminal domain of the delta subunit of the F1F0-ATP synthase"/>
    <property type="match status" value="1"/>
</dbReference>
<dbReference type="HAMAP" id="MF_01416">
    <property type="entry name" value="ATP_synth_delta_bact"/>
    <property type="match status" value="1"/>
</dbReference>
<dbReference type="InterPro" id="IPR026015">
    <property type="entry name" value="ATP_synth_OSCP/delta_N_sf"/>
</dbReference>
<dbReference type="InterPro" id="IPR020781">
    <property type="entry name" value="ATPase_OSCP/d_CS"/>
</dbReference>
<dbReference type="InterPro" id="IPR000711">
    <property type="entry name" value="ATPase_OSCP/dsu"/>
</dbReference>
<dbReference type="NCBIfam" id="TIGR01145">
    <property type="entry name" value="ATP_synt_delta"/>
    <property type="match status" value="1"/>
</dbReference>
<dbReference type="NCBIfam" id="NF004402">
    <property type="entry name" value="PRK05758.2-2"/>
    <property type="match status" value="1"/>
</dbReference>
<dbReference type="NCBIfam" id="NF004404">
    <property type="entry name" value="PRK05758.2-5"/>
    <property type="match status" value="1"/>
</dbReference>
<dbReference type="PANTHER" id="PTHR11910">
    <property type="entry name" value="ATP SYNTHASE DELTA CHAIN"/>
    <property type="match status" value="1"/>
</dbReference>
<dbReference type="Pfam" id="PF00213">
    <property type="entry name" value="OSCP"/>
    <property type="match status" value="1"/>
</dbReference>
<dbReference type="PRINTS" id="PR00125">
    <property type="entry name" value="ATPASEDELTA"/>
</dbReference>
<dbReference type="SUPFAM" id="SSF47928">
    <property type="entry name" value="N-terminal domain of the delta subunit of the F1F0-ATP synthase"/>
    <property type="match status" value="1"/>
</dbReference>
<dbReference type="PROSITE" id="PS00389">
    <property type="entry name" value="ATPASE_DELTA"/>
    <property type="match status" value="1"/>
</dbReference>